<evidence type="ECO:0000255" key="1">
    <source>
        <dbReference type="HAMAP-Rule" id="MF_01885"/>
    </source>
</evidence>
<evidence type="ECO:0007829" key="2">
    <source>
        <dbReference type="PDB" id="3N4J"/>
    </source>
</evidence>
<protein>
    <recommendedName>
        <fullName evidence="1">tRNA (cytidine(34)-2'-O)-methyltransferase</fullName>
        <ecNumber evidence="1">2.1.1.207</ecNumber>
    </recommendedName>
    <alternativeName>
        <fullName evidence="1">tRNA (cytidine/uridine-2'-O-)-methyltransferase TrmL</fullName>
    </alternativeName>
</protein>
<name>TRML_YERPE</name>
<organism>
    <name type="scientific">Yersinia pestis</name>
    <dbReference type="NCBI Taxonomy" id="632"/>
    <lineage>
        <taxon>Bacteria</taxon>
        <taxon>Pseudomonadati</taxon>
        <taxon>Pseudomonadota</taxon>
        <taxon>Gammaproteobacteria</taxon>
        <taxon>Enterobacterales</taxon>
        <taxon>Yersiniaceae</taxon>
        <taxon>Yersinia</taxon>
    </lineage>
</organism>
<comment type="function">
    <text evidence="1">Methylates the ribose at the nucleotide 34 wobble position in the two leucyl isoacceptors tRNA(Leu)(CmAA) and tRNA(Leu)(cmnm5UmAA). Catalyzes the methyl transfer from S-adenosyl-L-methionine to the 2'-OH of the wobble nucleotide.</text>
</comment>
<comment type="catalytic activity">
    <reaction evidence="1">
        <text>cytidine(34) in tRNA + S-adenosyl-L-methionine = 2'-O-methylcytidine(34) in tRNA + S-adenosyl-L-homocysteine + H(+)</text>
        <dbReference type="Rhea" id="RHEA:43084"/>
        <dbReference type="Rhea" id="RHEA-COMP:10331"/>
        <dbReference type="Rhea" id="RHEA-COMP:10332"/>
        <dbReference type="ChEBI" id="CHEBI:15378"/>
        <dbReference type="ChEBI" id="CHEBI:57856"/>
        <dbReference type="ChEBI" id="CHEBI:59789"/>
        <dbReference type="ChEBI" id="CHEBI:74495"/>
        <dbReference type="ChEBI" id="CHEBI:82748"/>
        <dbReference type="EC" id="2.1.1.207"/>
    </reaction>
</comment>
<comment type="catalytic activity">
    <reaction evidence="1">
        <text>5-carboxymethylaminomethyluridine(34) in tRNA(Leu) + S-adenosyl-L-methionine = 5-carboxymethylaminomethyl-2'-O-methyluridine(34) in tRNA(Leu) + S-adenosyl-L-homocysteine + H(+)</text>
        <dbReference type="Rhea" id="RHEA:43088"/>
        <dbReference type="Rhea" id="RHEA-COMP:10333"/>
        <dbReference type="Rhea" id="RHEA-COMP:10334"/>
        <dbReference type="ChEBI" id="CHEBI:15378"/>
        <dbReference type="ChEBI" id="CHEBI:57856"/>
        <dbReference type="ChEBI" id="CHEBI:59789"/>
        <dbReference type="ChEBI" id="CHEBI:74508"/>
        <dbReference type="ChEBI" id="CHEBI:74511"/>
        <dbReference type="EC" id="2.1.1.207"/>
    </reaction>
</comment>
<comment type="subunit">
    <text evidence="1">Homodimer.</text>
</comment>
<comment type="subcellular location">
    <subcellularLocation>
        <location evidence="1">Cytoplasm</location>
    </subcellularLocation>
</comment>
<comment type="similarity">
    <text evidence="1">Belongs to the class IV-like SAM-binding methyltransferase superfamily. RNA methyltransferase TrmH family. TrmL subfamily.</text>
</comment>
<keyword id="KW-0002">3D-structure</keyword>
<keyword id="KW-0963">Cytoplasm</keyword>
<keyword id="KW-0489">Methyltransferase</keyword>
<keyword id="KW-1185">Reference proteome</keyword>
<keyword id="KW-0949">S-adenosyl-L-methionine</keyword>
<keyword id="KW-0808">Transferase</keyword>
<keyword id="KW-0819">tRNA processing</keyword>
<proteinExistence type="evidence at protein level"/>
<dbReference type="EC" id="2.1.1.207" evidence="1"/>
<dbReference type="EMBL" id="AL590842">
    <property type="protein sequence ID" value="CAL18760.1"/>
    <property type="molecule type" value="Genomic_DNA"/>
</dbReference>
<dbReference type="EMBL" id="AE017042">
    <property type="protein sequence ID" value="AAS60351.1"/>
    <property type="molecule type" value="Genomic_DNA"/>
</dbReference>
<dbReference type="PIR" id="AG0009">
    <property type="entry name" value="AG0009"/>
</dbReference>
<dbReference type="RefSeq" id="WP_002208973.1">
    <property type="nucleotide sequence ID" value="NZ_WUCM01000015.1"/>
</dbReference>
<dbReference type="RefSeq" id="YP_002345165.1">
    <property type="nucleotide sequence ID" value="NC_003143.1"/>
</dbReference>
<dbReference type="PDB" id="3N4J">
    <property type="method" value="X-ray"/>
    <property type="resolution" value="1.47 A"/>
    <property type="chains" value="A=1-162"/>
</dbReference>
<dbReference type="PDB" id="3N4K">
    <property type="method" value="X-ray"/>
    <property type="resolution" value="1.76 A"/>
    <property type="chains" value="A/B=1-162"/>
</dbReference>
<dbReference type="PDBsum" id="3N4J"/>
<dbReference type="PDBsum" id="3N4K"/>
<dbReference type="SMR" id="Q74Y93"/>
<dbReference type="STRING" id="214092.YPO0071"/>
<dbReference type="PaxDb" id="214092-YPO0071"/>
<dbReference type="EnsemblBacteria" id="AAS60351">
    <property type="protein sequence ID" value="AAS60351"/>
    <property type="gene ID" value="YP_0071"/>
</dbReference>
<dbReference type="GeneID" id="57974521"/>
<dbReference type="KEGG" id="ype:YPO0071"/>
<dbReference type="KEGG" id="ypm:YP_0071"/>
<dbReference type="PATRIC" id="fig|214092.21.peg.293"/>
<dbReference type="eggNOG" id="COG0219">
    <property type="taxonomic scope" value="Bacteria"/>
</dbReference>
<dbReference type="HOGENOM" id="CLU_110125_1_0_6"/>
<dbReference type="OMA" id="AGLDYWH"/>
<dbReference type="OrthoDB" id="9789043at2"/>
<dbReference type="EvolutionaryTrace" id="Q74Y93"/>
<dbReference type="Proteomes" id="UP000000815">
    <property type="component" value="Chromosome"/>
</dbReference>
<dbReference type="Proteomes" id="UP000001019">
    <property type="component" value="Chromosome"/>
</dbReference>
<dbReference type="GO" id="GO:0005737">
    <property type="term" value="C:cytoplasm"/>
    <property type="evidence" value="ECO:0007669"/>
    <property type="project" value="UniProtKB-SubCell"/>
</dbReference>
<dbReference type="GO" id="GO:0003723">
    <property type="term" value="F:RNA binding"/>
    <property type="evidence" value="ECO:0007669"/>
    <property type="project" value="InterPro"/>
</dbReference>
<dbReference type="GO" id="GO:0141102">
    <property type="term" value="F:tRNA (5-carboxymethylaminomethyluridine(34)-2'-O)-methyltransferase activity"/>
    <property type="evidence" value="ECO:0007669"/>
    <property type="project" value="RHEA"/>
</dbReference>
<dbReference type="GO" id="GO:0141098">
    <property type="term" value="F:tRNA (cytidine(34)-2'-O)-methyltransferase activity"/>
    <property type="evidence" value="ECO:0007669"/>
    <property type="project" value="RHEA"/>
</dbReference>
<dbReference type="GO" id="GO:0002131">
    <property type="term" value="P:wobble position cytosine ribose methylation"/>
    <property type="evidence" value="ECO:0000318"/>
    <property type="project" value="GO_Central"/>
</dbReference>
<dbReference type="GO" id="GO:0002132">
    <property type="term" value="P:wobble position uridine ribose methylation"/>
    <property type="evidence" value="ECO:0000318"/>
    <property type="project" value="GO_Central"/>
</dbReference>
<dbReference type="CDD" id="cd18094">
    <property type="entry name" value="SpoU-like_TrmL"/>
    <property type="match status" value="1"/>
</dbReference>
<dbReference type="FunFam" id="3.40.1280.10:FF:000002">
    <property type="entry name" value="Peptidylprolyl isomerase"/>
    <property type="match status" value="1"/>
</dbReference>
<dbReference type="Gene3D" id="3.40.1280.10">
    <property type="match status" value="1"/>
</dbReference>
<dbReference type="HAMAP" id="MF_01885">
    <property type="entry name" value="tRNA_methyltr_TrmL"/>
    <property type="match status" value="1"/>
</dbReference>
<dbReference type="InterPro" id="IPR029028">
    <property type="entry name" value="Alpha/beta_knot_MTases"/>
</dbReference>
<dbReference type="InterPro" id="IPR001537">
    <property type="entry name" value="SpoU_MeTrfase"/>
</dbReference>
<dbReference type="InterPro" id="IPR016914">
    <property type="entry name" value="TrmL"/>
</dbReference>
<dbReference type="InterPro" id="IPR029026">
    <property type="entry name" value="tRNA_m1G_MTases_N"/>
</dbReference>
<dbReference type="NCBIfam" id="NF007683">
    <property type="entry name" value="PRK10358.1"/>
    <property type="match status" value="1"/>
</dbReference>
<dbReference type="NCBIfam" id="TIGR00185">
    <property type="entry name" value="tRNA_yibK_trmL"/>
    <property type="match status" value="1"/>
</dbReference>
<dbReference type="PANTHER" id="PTHR42971">
    <property type="entry name" value="TRNA (CYTIDINE(34)-2'-O)-METHYLTRANSFERASE"/>
    <property type="match status" value="1"/>
</dbReference>
<dbReference type="PANTHER" id="PTHR42971:SF1">
    <property type="entry name" value="TRNA (CYTIDINE(34)-2'-O)-METHYLTRANSFERASE"/>
    <property type="match status" value="1"/>
</dbReference>
<dbReference type="Pfam" id="PF00588">
    <property type="entry name" value="SpoU_methylase"/>
    <property type="match status" value="1"/>
</dbReference>
<dbReference type="PIRSF" id="PIRSF029256">
    <property type="entry name" value="SpoU_TrmH_prd"/>
    <property type="match status" value="1"/>
</dbReference>
<dbReference type="SUPFAM" id="SSF75217">
    <property type="entry name" value="alpha/beta knot"/>
    <property type="match status" value="1"/>
</dbReference>
<sequence length="162" mass="18234">MLNIVLFEPEIPPNTGNIIRLCANTGCQLHLIKPLGFTWDDKRLRRAGLDYHEFADIKHHHDYQAFLDSEKLDSTQPARLFALTTKGTPAHSAVSYQANDYLLFGPETRGLPAYILDALPAQQKIRIPMQADSRSMNLSNAVSVVVYEAWRQLGYPGALLKE</sequence>
<reference key="1">
    <citation type="journal article" date="2001" name="Nature">
        <title>Genome sequence of Yersinia pestis, the causative agent of plague.</title>
        <authorList>
            <person name="Parkhill J."/>
            <person name="Wren B.W."/>
            <person name="Thomson N.R."/>
            <person name="Titball R.W."/>
            <person name="Holden M.T.G."/>
            <person name="Prentice M.B."/>
            <person name="Sebaihia M."/>
            <person name="James K.D."/>
            <person name="Churcher C.M."/>
            <person name="Mungall K.L."/>
            <person name="Baker S."/>
            <person name="Basham D."/>
            <person name="Bentley S.D."/>
            <person name="Brooks K."/>
            <person name="Cerdeno-Tarraga A.-M."/>
            <person name="Chillingworth T."/>
            <person name="Cronin A."/>
            <person name="Davies R.M."/>
            <person name="Davis P."/>
            <person name="Dougan G."/>
            <person name="Feltwell T."/>
            <person name="Hamlin N."/>
            <person name="Holroyd S."/>
            <person name="Jagels K."/>
            <person name="Karlyshev A.V."/>
            <person name="Leather S."/>
            <person name="Moule S."/>
            <person name="Oyston P.C.F."/>
            <person name="Quail M.A."/>
            <person name="Rutherford K.M."/>
            <person name="Simmonds M."/>
            <person name="Skelton J."/>
            <person name="Stevens K."/>
            <person name="Whitehead S."/>
            <person name="Barrell B.G."/>
        </authorList>
    </citation>
    <scope>NUCLEOTIDE SEQUENCE [LARGE SCALE GENOMIC DNA]</scope>
    <source>
        <strain>CO-92 / Biovar Orientalis</strain>
    </source>
</reference>
<reference key="2">
    <citation type="journal article" date="2004" name="DNA Res.">
        <title>Complete genome sequence of Yersinia pestis strain 91001, an isolate avirulent to humans.</title>
        <authorList>
            <person name="Song Y."/>
            <person name="Tong Z."/>
            <person name="Wang J."/>
            <person name="Wang L."/>
            <person name="Guo Z."/>
            <person name="Han Y."/>
            <person name="Zhang J."/>
            <person name="Pei D."/>
            <person name="Zhou D."/>
            <person name="Qin H."/>
            <person name="Pang X."/>
            <person name="Han Y."/>
            <person name="Zhai J."/>
            <person name="Li M."/>
            <person name="Cui B."/>
            <person name="Qi Z."/>
            <person name="Jin L."/>
            <person name="Dai R."/>
            <person name="Chen F."/>
            <person name="Li S."/>
            <person name="Ye C."/>
            <person name="Du Z."/>
            <person name="Lin W."/>
            <person name="Wang J."/>
            <person name="Yu J."/>
            <person name="Yang H."/>
            <person name="Wang J."/>
            <person name="Huang P."/>
            <person name="Yang R."/>
        </authorList>
    </citation>
    <scope>NUCLEOTIDE SEQUENCE [LARGE SCALE GENOMIC DNA]</scope>
    <source>
        <strain>91001 / Biovar Mediaevalis</strain>
    </source>
</reference>
<reference key="3">
    <citation type="submission" date="2010-06" db="PDB data bank">
        <title>X-ray crystal structure of putative RNA methyltransferase from Yersinia pestis.</title>
        <authorList>
            <person name="Osipiuk J."/>
            <person name="Maltseva N."/>
            <person name="Peterson S."/>
            <person name="Anderson W.F."/>
            <person name="Joachimiak A."/>
        </authorList>
    </citation>
    <scope>X-RAY CRYSTALLOGRAPHY (1.47 ANGSTROMS) IN COMPLEX WITH S-ADENOSYL-L-HOMOCYSTEINE</scope>
    <source>
        <strain>CO-92 / Biovar Orientalis</strain>
    </source>
</reference>
<gene>
    <name evidence="1" type="primary">trmL</name>
    <name type="ordered locus">YPO0071</name>
    <name type="ordered locus">YP_0071</name>
</gene>
<accession>Q74Y93</accession>
<feature type="chain" id="PRO_0000401955" description="tRNA (cytidine(34)-2'-O)-methyltransferase">
    <location>
        <begin position="1"/>
        <end position="162"/>
    </location>
</feature>
<feature type="binding site" evidence="1">
    <location>
        <position position="83"/>
    </location>
    <ligand>
        <name>S-adenosyl-L-methionine</name>
        <dbReference type="ChEBI" id="CHEBI:59789"/>
    </ligand>
</feature>
<feature type="binding site" evidence="1">
    <location>
        <position position="105"/>
    </location>
    <ligand>
        <name>S-adenosyl-L-methionine</name>
        <dbReference type="ChEBI" id="CHEBI:59789"/>
    </ligand>
</feature>
<feature type="binding site" evidence="1">
    <location>
        <position position="127"/>
    </location>
    <ligand>
        <name>S-adenosyl-L-methionine</name>
        <dbReference type="ChEBI" id="CHEBI:59789"/>
    </ligand>
</feature>
<feature type="binding site" evidence="1">
    <location>
        <position position="135"/>
    </location>
    <ligand>
        <name>S-adenosyl-L-methionine</name>
        <dbReference type="ChEBI" id="CHEBI:59789"/>
    </ligand>
</feature>
<feature type="strand" evidence="2">
    <location>
        <begin position="2"/>
        <end position="8"/>
    </location>
</feature>
<feature type="helix" evidence="2">
    <location>
        <begin position="12"/>
        <end position="25"/>
    </location>
</feature>
<feature type="strand" evidence="2">
    <location>
        <begin position="28"/>
        <end position="33"/>
    </location>
</feature>
<feature type="helix" evidence="2">
    <location>
        <begin position="41"/>
        <end position="46"/>
    </location>
</feature>
<feature type="helix" evidence="2">
    <location>
        <begin position="51"/>
        <end position="54"/>
    </location>
</feature>
<feature type="strand" evidence="2">
    <location>
        <begin position="58"/>
        <end position="62"/>
    </location>
</feature>
<feature type="helix" evidence="2">
    <location>
        <begin position="63"/>
        <end position="69"/>
    </location>
</feature>
<feature type="strand" evidence="2">
    <location>
        <begin position="74"/>
        <end position="76"/>
    </location>
</feature>
<feature type="strand" evidence="2">
    <location>
        <begin position="80"/>
        <end position="83"/>
    </location>
</feature>
<feature type="strand" evidence="2">
    <location>
        <begin position="88"/>
        <end position="90"/>
    </location>
</feature>
<feature type="turn" evidence="2">
    <location>
        <begin position="91"/>
        <end position="93"/>
    </location>
</feature>
<feature type="strand" evidence="2">
    <location>
        <begin position="100"/>
        <end position="104"/>
    </location>
</feature>
<feature type="turn" evidence="2">
    <location>
        <begin position="107"/>
        <end position="109"/>
    </location>
</feature>
<feature type="helix" evidence="2">
    <location>
        <begin position="113"/>
        <end position="116"/>
    </location>
</feature>
<feature type="helix" evidence="2">
    <location>
        <begin position="121"/>
        <end position="123"/>
    </location>
</feature>
<feature type="strand" evidence="2">
    <location>
        <begin position="124"/>
        <end position="126"/>
    </location>
</feature>
<feature type="helix" evidence="2">
    <location>
        <begin position="138"/>
        <end position="153"/>
    </location>
</feature>